<sequence length="1651" mass="180748">MKWKHLPLLVMISLLTLSKKHLLLAQLIPDPEDLERGNDNGTPAPTSDNDDNSLGYTGSRLRQEDFPPRIVEHPSDLIVSKGEPATLNCKAEGRPTPTIEWYKGGERVETDKDDPRSHRMLLPSGSLFFLRIVHGRKSRPDEGVYICVARNYLGEAVSHNASLEVAILRDDFRQNPSDVMVAVGEPAVMECQPPRGHPEPTISWKKDGSPLDDKDERITIRGGKLMITYTRKSDAGKYVCVGTNMVGERESKVADVTVLERPSFVKRPSNLAVTVDDSAEFKCEARGDPVPTFGWRKDDGELPKSRYEIRDDHTLKIRKVTAGDMGSYTCVAENMVGKAEASATLTVQEPPHFVVKPRDQVVALGRTVTFQCEATGNPQPAIFWRREGSQNLLFSYQPPQSSSRFSVSQTGDLTVTNVQRSDVGYYICQTLNVAGSIITKAYLEVTDVIADRPPPVIRQGPVNQTVAVDGTLTLSCVATGSPVPTILWRKDGVLVSTQDSRIKQLESGVLQIRYAKLGDTGRYTCTASTPSGEATWSAYIEVQEFGVPVQPPRPTDPNLIPSAPSKPEVTDVSKNTVTLLWQPNLNSGATPTSYIIEAFSHASGSSWQTVAENVKTETFAIKGLKPNAIYLFLVRAANAYGISDPSQISDPVKTQDVPPTTQGVDHKQVQRELGNVVLHLHNPTILSSSSVEVHWTVDQQSQYIQGYKILYRPSGASHGESEWLVFEVRTPTKNSVVIPDLRKGVNYEIKARPFFNEFQGADSEIKFAKTLEERPSAPPRSVTVSKNDGNGTAILVTWQPPPEDTQNGMVQEYKVWCLGNETRYHINKTVDGSTFSVVIPFLVPGIRYSVEVAASTGAGPGVKSEPQFIQLDSHGNPVSPEDQVSLAQQISDVVKQPAFIAGIGAACWIILMVFSIWLYRHRKKRNGLSSTYAGIRKVPSFTFTPTVTYQRGGEAVSSGGRPGLLNISEPATQPWLADTWPNTGNSHNDCSINCCTASNGNSDSNLTTYSRPADCIANYNNQLDNKQTNLMLPESTVYGDVDLSNKINEMKTFNSPNLKDGRFVNPSGQPTPYATTQLIQANLINNMNNGGGDSSEKHWKPPGQQKQEVAPIQYNIMEQNKLNKDYRANDTILPTIPYNHSYDQNTGGSYNSSDRGSSTSGSQGHKKGARTPKAPKQGGMNWADLLPPPPAHPPPHSNSEEYSMSVDESYDQEMPCPVPPARMYLQQDELEEEEAERGPTPPVRGAASSPAAVSYSHQSTATLTPSPQEELQPMLQDCPEDLGHMPHPPDRRRQPVSPPPPPRPISPPHTYGYISGPLVSDMDTDAPEEEEDEADMEVAKMQTRRLLLRGLEQTPASSVGDLESSVTGSMINGWGSASEEDNISSGRSSVSSSDGSFFTDADFAQAVAAAAEYAGLKVARRQMQDAAGRRHFHASQCPRPTSPVSTDSNMSAAVIQKARPTKKQKHQPGHLRREAYTDDLPPPPVPPPAIKSPSVQSKAQLEARPIMGPKLASIEARADRSSDRKGGSYKGREALDGRQVTDLRTSPGDPREAQEQPNEGKARGTKTAKRDLPPAKTHLIPEDILPYCRPTFPTSNNPRDPSSSSSMSSRGSGSRQREQANVGRRNMAEMQVLGGFERGDENNEELEETES</sequence>
<gene>
    <name type="primary">Robo1</name>
</gene>
<feature type="signal peptide" evidence="3">
    <location>
        <begin position="1"/>
        <end position="25"/>
    </location>
</feature>
<feature type="chain" id="PRO_0000031035" description="Roundabout homolog 1">
    <location>
        <begin position="26"/>
        <end position="1651"/>
    </location>
</feature>
<feature type="topological domain" description="Extracellular" evidence="3">
    <location>
        <begin position="26"/>
        <end position="897"/>
    </location>
</feature>
<feature type="transmembrane region" description="Helical" evidence="3">
    <location>
        <begin position="898"/>
        <end position="918"/>
    </location>
</feature>
<feature type="topological domain" description="Cytoplasmic" evidence="3">
    <location>
        <begin position="919"/>
        <end position="1651"/>
    </location>
</feature>
<feature type="domain" description="Ig-like C2-type 1">
    <location>
        <begin position="68"/>
        <end position="164"/>
    </location>
</feature>
<feature type="domain" description="Ig-like C2-type 2">
    <location>
        <begin position="170"/>
        <end position="257"/>
    </location>
</feature>
<feature type="domain" description="Ig-like C2-type 3">
    <location>
        <begin position="262"/>
        <end position="346"/>
    </location>
</feature>
<feature type="domain" description="Ig-like C2-type 4">
    <location>
        <begin position="351"/>
        <end position="446"/>
    </location>
</feature>
<feature type="domain" description="Ig-like C2-type 5">
    <location>
        <begin position="455"/>
        <end position="541"/>
    </location>
</feature>
<feature type="domain" description="Fibronectin type-III 1" evidence="5">
    <location>
        <begin position="563"/>
        <end position="657"/>
    </location>
</feature>
<feature type="domain" description="Fibronectin type-III 2" evidence="5">
    <location>
        <begin position="676"/>
        <end position="773"/>
    </location>
</feature>
<feature type="domain" description="Fibronectin type-III 3" evidence="5">
    <location>
        <begin position="778"/>
        <end position="874"/>
    </location>
</feature>
<feature type="region of interest" description="Disordered" evidence="6">
    <location>
        <begin position="31"/>
        <end position="66"/>
    </location>
</feature>
<feature type="region of interest" description="Disordered" evidence="6">
    <location>
        <begin position="1086"/>
        <end position="1107"/>
    </location>
</feature>
<feature type="region of interest" description="Disordered" evidence="6">
    <location>
        <begin position="1137"/>
        <end position="1337"/>
    </location>
</feature>
<feature type="region of interest" description="Disordered" evidence="6">
    <location>
        <begin position="1352"/>
        <end position="1397"/>
    </location>
</feature>
<feature type="region of interest" description="Disordered" evidence="6">
    <location>
        <begin position="1420"/>
        <end position="1651"/>
    </location>
</feature>
<feature type="compositionally biased region" description="Polar residues" evidence="6">
    <location>
        <begin position="39"/>
        <end position="56"/>
    </location>
</feature>
<feature type="compositionally biased region" description="Low complexity" evidence="6">
    <location>
        <begin position="1147"/>
        <end position="1163"/>
    </location>
</feature>
<feature type="compositionally biased region" description="Pro residues" evidence="6">
    <location>
        <begin position="1186"/>
        <end position="1196"/>
    </location>
</feature>
<feature type="compositionally biased region" description="Polar residues" evidence="6">
    <location>
        <begin position="1255"/>
        <end position="1269"/>
    </location>
</feature>
<feature type="compositionally biased region" description="Basic and acidic residues" evidence="6">
    <location>
        <begin position="1281"/>
        <end position="1293"/>
    </location>
</feature>
<feature type="compositionally biased region" description="Pro residues" evidence="6">
    <location>
        <begin position="1296"/>
        <end position="1307"/>
    </location>
</feature>
<feature type="compositionally biased region" description="Acidic residues" evidence="6">
    <location>
        <begin position="1322"/>
        <end position="1336"/>
    </location>
</feature>
<feature type="compositionally biased region" description="Low complexity" evidence="6">
    <location>
        <begin position="1384"/>
        <end position="1397"/>
    </location>
</feature>
<feature type="compositionally biased region" description="Polar residues" evidence="6">
    <location>
        <begin position="1438"/>
        <end position="1451"/>
    </location>
</feature>
<feature type="compositionally biased region" description="Basic residues" evidence="6">
    <location>
        <begin position="1459"/>
        <end position="1470"/>
    </location>
</feature>
<feature type="compositionally biased region" description="Pro residues" evidence="6">
    <location>
        <begin position="1480"/>
        <end position="1490"/>
    </location>
</feature>
<feature type="compositionally biased region" description="Basic and acidic residues" evidence="6">
    <location>
        <begin position="1516"/>
        <end position="1541"/>
    </location>
</feature>
<feature type="compositionally biased region" description="Basic and acidic residues" evidence="6">
    <location>
        <begin position="1549"/>
        <end position="1573"/>
    </location>
</feature>
<feature type="compositionally biased region" description="Polar residues" evidence="6">
    <location>
        <begin position="1592"/>
        <end position="1601"/>
    </location>
</feature>
<feature type="compositionally biased region" description="Low complexity" evidence="6">
    <location>
        <begin position="1602"/>
        <end position="1614"/>
    </location>
</feature>
<feature type="compositionally biased region" description="Acidic residues" evidence="6">
    <location>
        <begin position="1642"/>
        <end position="1651"/>
    </location>
</feature>
<feature type="modified residue" description="Phosphoserine" evidence="2">
    <location>
        <position position="940"/>
    </location>
</feature>
<feature type="modified residue" description="Phosphothreonine" evidence="2">
    <location>
        <position position="948"/>
    </location>
</feature>
<feature type="modified residue" description="Phosphotyrosine" evidence="2">
    <location>
        <position position="1038"/>
    </location>
</feature>
<feature type="modified residue" description="Phosphoserine" evidence="2">
    <location>
        <position position="1055"/>
    </location>
</feature>
<feature type="modified residue" description="Phosphotyrosine" evidence="2">
    <location>
        <position position="1073"/>
    </location>
</feature>
<feature type="modified residue" description="Phosphotyrosine" evidence="2">
    <location>
        <position position="1114"/>
    </location>
</feature>
<feature type="modified residue" description="Phosphothreonine" evidence="2">
    <location>
        <position position="1240"/>
    </location>
</feature>
<feature type="modified residue" description="Phosphoserine" evidence="2">
    <location>
        <position position="1297"/>
    </location>
</feature>
<feature type="glycosylation site" description="N-linked (GlcNAc...) asparagine" evidence="3">
    <location>
        <position position="160"/>
    </location>
</feature>
<feature type="glycosylation site" description="N-linked (GlcNAc...) asparagine" evidence="3">
    <location>
        <position position="463"/>
    </location>
</feature>
<feature type="glycosylation site" description="N-linked (GlcNAc...) asparagine" evidence="3">
    <location>
        <position position="790"/>
    </location>
</feature>
<feature type="glycosylation site" description="N-linked (GlcNAc...) asparagine" evidence="3">
    <location>
        <position position="820"/>
    </location>
</feature>
<feature type="glycosylation site" description="N-linked (GlcNAc...) asparagine" evidence="3">
    <location>
        <position position="827"/>
    </location>
</feature>
<feature type="disulfide bond" evidence="4">
    <location>
        <begin position="89"/>
        <end position="147"/>
    </location>
</feature>
<feature type="disulfide bond" evidence="4">
    <location>
        <begin position="191"/>
        <end position="240"/>
    </location>
</feature>
<feature type="disulfide bond" evidence="4">
    <location>
        <begin position="283"/>
        <end position="330"/>
    </location>
</feature>
<feature type="disulfide bond" evidence="4">
    <location>
        <begin position="372"/>
        <end position="428"/>
    </location>
</feature>
<feature type="disulfide bond" evidence="4">
    <location>
        <begin position="476"/>
        <end position="525"/>
    </location>
</feature>
<evidence type="ECO:0000250" key="1">
    <source>
        <dbReference type="UniProtKB" id="O89026"/>
    </source>
</evidence>
<evidence type="ECO:0000250" key="2">
    <source>
        <dbReference type="UniProtKB" id="Q9Y6N7"/>
    </source>
</evidence>
<evidence type="ECO:0000255" key="3"/>
<evidence type="ECO:0000255" key="4">
    <source>
        <dbReference type="PROSITE-ProRule" id="PRU00114"/>
    </source>
</evidence>
<evidence type="ECO:0000255" key="5">
    <source>
        <dbReference type="PROSITE-ProRule" id="PRU00316"/>
    </source>
</evidence>
<evidence type="ECO:0000256" key="6">
    <source>
        <dbReference type="SAM" id="MobiDB-lite"/>
    </source>
</evidence>
<evidence type="ECO:0000269" key="7">
    <source>
    </source>
</evidence>
<evidence type="ECO:0000269" key="8">
    <source>
    </source>
</evidence>
<evidence type="ECO:0000269" key="9">
    <source>
    </source>
</evidence>
<evidence type="ECO:0000269" key="10">
    <source>
    </source>
</evidence>
<evidence type="ECO:0000305" key="11"/>
<evidence type="ECO:0000305" key="12">
    <source>
    </source>
</evidence>
<keyword id="KW-1003">Cell membrane</keyword>
<keyword id="KW-0966">Cell projection</keyword>
<keyword id="KW-0145">Chemotaxis</keyword>
<keyword id="KW-0217">Developmental protein</keyword>
<keyword id="KW-0221">Differentiation</keyword>
<keyword id="KW-1015">Disulfide bond</keyword>
<keyword id="KW-0325">Glycoprotein</keyword>
<keyword id="KW-0393">Immunoglobulin domain</keyword>
<keyword id="KW-0472">Membrane</keyword>
<keyword id="KW-0524">Neurogenesis</keyword>
<keyword id="KW-0597">Phosphoprotein</keyword>
<keyword id="KW-0675">Receptor</keyword>
<keyword id="KW-1185">Reference proteome</keyword>
<keyword id="KW-0677">Repeat</keyword>
<keyword id="KW-0732">Signal</keyword>
<keyword id="KW-0812">Transmembrane</keyword>
<keyword id="KW-1133">Transmembrane helix</keyword>
<keyword id="KW-0832">Ubl conjugation</keyword>
<reference key="1">
    <citation type="journal article" date="1998" name="Cell">
        <title>Roundabout controls axon crossing of the CNS midline and defines a novel subfamily of evolutionarily conserved guidance receptors.</title>
        <authorList>
            <person name="Kidd T."/>
            <person name="Brose K."/>
            <person name="Mitchell K.J."/>
            <person name="Fetter R.D."/>
            <person name="Tessier-Lavigne M."/>
            <person name="Goodman C.S."/>
            <person name="Tear G."/>
        </authorList>
    </citation>
    <scope>NUCLEOTIDE SEQUENCE [MRNA]</scope>
    <scope>TISSUE SPECIFICITY</scope>
    <source>
        <tissue>Spinal cord</tissue>
    </source>
</reference>
<reference key="2">
    <citation type="journal article" date="1999" name="Cell">
        <title>Slit proteins bind Robo receptors and have an evolutionarily conserved role in repulsive axon guidance.</title>
        <authorList>
            <person name="Brose K."/>
            <person name="Bland K.S."/>
            <person name="Wang K.H."/>
            <person name="Arnott D."/>
            <person name="Henzel W."/>
            <person name="Goodman C.S."/>
            <person name="Tessier-Lavigne M."/>
            <person name="Kidd T."/>
        </authorList>
    </citation>
    <scope>TISSUE SPECIFICITY</scope>
    <scope>DEVELOPMENTAL STAGE</scope>
</reference>
<reference key="3">
    <citation type="journal article" date="2002" name="J. Comp. Neurol.">
        <title>Spatiotemporal expression patterns of slit and robo genes in the rat brain.</title>
        <authorList>
            <person name="Marillat V."/>
            <person name="Cases O."/>
            <person name="Nguyen-Ba-Charvet K.T."/>
            <person name="Tessier-Lavigne M."/>
            <person name="Sotelo C."/>
            <person name="Chedotal A."/>
        </authorList>
    </citation>
    <scope>DEVELOPMENTAL STAGE</scope>
</reference>
<reference key="4">
    <citation type="journal article" date="2017" name="PLoS Genet.">
        <title>The WAGR syndrome gene PRRG4 is a functional homologue of the commissureless axon guidance gene.</title>
        <authorList>
            <person name="Justice E.D."/>
            <person name="Barnum S.J."/>
            <person name="Kidd T."/>
        </authorList>
    </citation>
    <scope>SUBCELLULAR LOCATION</scope>
</reference>
<comment type="function">
    <text evidence="1 2">Receptor for SLIT1 and SLIT2 that mediates cellular responses to molecular guidance cues in cellular migration, including axonal navigation at the ventral midline of the neural tube and projection of axons to different regions during neuronal development. Interaction with the intracellular domain of FLRT3 mediates axon attraction towards cells expressing NTN1 (By similarity). In axon growth cones, the silencing of the attractive effect of NTN1 by SLIT2 may require the formation of a ROBO1-DCC complex (By similarity). Plays a role in the regulation of cell migration via its interaction with MYO9B; inhibits MYO9B-mediated stimulation of RHOA GTPase activity, and thereby leads to increased levels of active, GTP-bound RHOA (By similarity). May be required for lung development (By similarity).</text>
</comment>
<comment type="subunit">
    <text evidence="1 2">Homodimer. Dimerization is mediated by the extracellular domain and is independent of SLIT liganding (By similarity). Interacts with SLIT1 (By similarity). Interacts with SLIT2. Interacts with FLRT3. Interacts with MYO9B (via Rho-GAP domain) (By similarity).</text>
</comment>
<comment type="interaction">
    <interactant intactId="EBI-3505237">
        <id>O55005</id>
    </interactant>
    <interactant intactId="EBI-1798965">
        <id>Q63155</id>
        <label>Dcc</label>
    </interactant>
    <organismsDiffer>false</organismsDiffer>
    <experiments>2</experiments>
</comment>
<comment type="subcellular location">
    <subcellularLocation>
        <location evidence="9">Cell membrane</location>
        <topology evidence="2">Single-pass type I membrane protein</topology>
    </subcellularLocation>
    <subcellularLocation>
        <location evidence="1">Cell projection</location>
        <location evidence="1">Axon</location>
    </subcellularLocation>
    <subcellularLocation>
        <location evidence="9">Endoplasmic reticulum-Golgi intermediate compartment membrane</location>
        <topology evidence="12">Single-pass membrane protein</topology>
    </subcellularLocation>
    <text evidence="1 9">Detected at growth cones in thalamus neurons (By similarity). PRRG4 prevents cell surface location and both colocalize in the Endoplasmic reticulum/Golgi adjacent to the cell nucleus (PubMed:28859078).</text>
</comment>
<comment type="tissue specificity">
    <text evidence="7 10">Expressed in embryonal brain and spinal cord.</text>
</comment>
<comment type="developmental stage">
    <text evidence="7 8">In the developing spinal cord expressed at 11 dpc and 13 dpc dorsally in the region of the commissural and association neuron cell bodies and ventrally in subpopulations in the motor column. In the brain detected between 15 dpc and 18 dpc, between P0 and P10, and in adult in regions of the hippocampal system and the basal ganglia. Detected at 18 dpc, between P0 and P10, and in adult in anterior olfactory nuclei, regions of the cortex and basal telencephalon.</text>
</comment>
<comment type="PTM">
    <text evidence="1">Ubiquitinated. May be deubiquitinated by USP33.</text>
</comment>
<comment type="similarity">
    <text evidence="11">Belongs to the immunoglobulin superfamily. ROBO family.</text>
</comment>
<dbReference type="EMBL" id="AF041082">
    <property type="protein sequence ID" value="AAC39960.1"/>
    <property type="molecule type" value="mRNA"/>
</dbReference>
<dbReference type="PIR" id="T14160">
    <property type="entry name" value="T14160"/>
</dbReference>
<dbReference type="RefSeq" id="NP_071524.1">
    <property type="nucleotide sequence ID" value="NM_022188.1"/>
</dbReference>
<dbReference type="SMR" id="O55005"/>
<dbReference type="BioGRID" id="248681">
    <property type="interactions" value="2"/>
</dbReference>
<dbReference type="DIP" id="DIP-48941N"/>
<dbReference type="FunCoup" id="O55005">
    <property type="interactions" value="2022"/>
</dbReference>
<dbReference type="IntAct" id="O55005">
    <property type="interactions" value="2"/>
</dbReference>
<dbReference type="STRING" id="10116.ENSRNOP00000069709"/>
<dbReference type="GlyCosmos" id="O55005">
    <property type="glycosylation" value="5 sites, No reported glycans"/>
</dbReference>
<dbReference type="GlyGen" id="O55005">
    <property type="glycosylation" value="7 sites"/>
</dbReference>
<dbReference type="iPTMnet" id="O55005"/>
<dbReference type="PhosphoSitePlus" id="O55005"/>
<dbReference type="PaxDb" id="10116-ENSRNOP00000044134"/>
<dbReference type="GeneID" id="58946"/>
<dbReference type="KEGG" id="rno:58946"/>
<dbReference type="UCSC" id="RGD:61941">
    <property type="organism name" value="rat"/>
</dbReference>
<dbReference type="AGR" id="RGD:61941"/>
<dbReference type="CTD" id="6091"/>
<dbReference type="RGD" id="61941">
    <property type="gene designation" value="Robo1"/>
</dbReference>
<dbReference type="eggNOG" id="KOG4222">
    <property type="taxonomic scope" value="Eukaryota"/>
</dbReference>
<dbReference type="InParanoid" id="O55005"/>
<dbReference type="PhylomeDB" id="O55005"/>
<dbReference type="PRO" id="PR:O55005"/>
<dbReference type="Proteomes" id="UP000002494">
    <property type="component" value="Unplaced"/>
</dbReference>
<dbReference type="GO" id="GO:0030673">
    <property type="term" value="C:axolemma"/>
    <property type="evidence" value="ECO:0000266"/>
    <property type="project" value="RGD"/>
</dbReference>
<dbReference type="GO" id="GO:0030424">
    <property type="term" value="C:axon"/>
    <property type="evidence" value="ECO:0000314"/>
    <property type="project" value="RGD"/>
</dbReference>
<dbReference type="GO" id="GO:0009986">
    <property type="term" value="C:cell surface"/>
    <property type="evidence" value="ECO:0000266"/>
    <property type="project" value="RGD"/>
</dbReference>
<dbReference type="GO" id="GO:0005737">
    <property type="term" value="C:cytoplasm"/>
    <property type="evidence" value="ECO:0000266"/>
    <property type="project" value="RGD"/>
</dbReference>
<dbReference type="GO" id="GO:0030425">
    <property type="term" value="C:dendrite"/>
    <property type="evidence" value="ECO:0000314"/>
    <property type="project" value="RGD"/>
</dbReference>
<dbReference type="GO" id="GO:0033116">
    <property type="term" value="C:endoplasmic reticulum-Golgi intermediate compartment membrane"/>
    <property type="evidence" value="ECO:0007669"/>
    <property type="project" value="UniProtKB-SubCell"/>
</dbReference>
<dbReference type="GO" id="GO:0043025">
    <property type="term" value="C:neuronal cell body"/>
    <property type="evidence" value="ECO:0000314"/>
    <property type="project" value="RGD"/>
</dbReference>
<dbReference type="GO" id="GO:0005886">
    <property type="term" value="C:plasma membrane"/>
    <property type="evidence" value="ECO:0000318"/>
    <property type="project" value="GO_Central"/>
</dbReference>
<dbReference type="GO" id="GO:0008046">
    <property type="term" value="F:axon guidance receptor activity"/>
    <property type="evidence" value="ECO:0000314"/>
    <property type="project" value="RGD"/>
</dbReference>
<dbReference type="GO" id="GO:0042802">
    <property type="term" value="F:identical protein binding"/>
    <property type="evidence" value="ECO:0000266"/>
    <property type="project" value="RGD"/>
</dbReference>
<dbReference type="GO" id="GO:0030275">
    <property type="term" value="F:LRR domain binding"/>
    <property type="evidence" value="ECO:0000266"/>
    <property type="project" value="RGD"/>
</dbReference>
<dbReference type="GO" id="GO:0035904">
    <property type="term" value="P:aorta development"/>
    <property type="evidence" value="ECO:0000266"/>
    <property type="project" value="RGD"/>
</dbReference>
<dbReference type="GO" id="GO:0003180">
    <property type="term" value="P:aortic valve morphogenesis"/>
    <property type="evidence" value="ECO:0000266"/>
    <property type="project" value="RGD"/>
</dbReference>
<dbReference type="GO" id="GO:0007411">
    <property type="term" value="P:axon guidance"/>
    <property type="evidence" value="ECO:0000314"/>
    <property type="project" value="RGD"/>
</dbReference>
<dbReference type="GO" id="GO:0016199">
    <property type="term" value="P:axon midline choice point recognition"/>
    <property type="evidence" value="ECO:0000270"/>
    <property type="project" value="UniProtKB"/>
</dbReference>
<dbReference type="GO" id="GO:0002042">
    <property type="term" value="P:cell migration involved in sprouting angiogenesis"/>
    <property type="evidence" value="ECO:0000266"/>
    <property type="project" value="RGD"/>
</dbReference>
<dbReference type="GO" id="GO:0071456">
    <property type="term" value="P:cellular response to hypoxia"/>
    <property type="evidence" value="ECO:0000270"/>
    <property type="project" value="RGD"/>
</dbReference>
<dbReference type="GO" id="GO:0021836">
    <property type="term" value="P:chemorepulsion involved in postnatal olfactory bulb interneuron migration"/>
    <property type="evidence" value="ECO:0000266"/>
    <property type="project" value="RGD"/>
</dbReference>
<dbReference type="GO" id="GO:0060976">
    <property type="term" value="P:coronary vasculature development"/>
    <property type="evidence" value="ECO:0000266"/>
    <property type="project" value="RGD"/>
</dbReference>
<dbReference type="GO" id="GO:0003272">
    <property type="term" value="P:endocardial cushion formation"/>
    <property type="evidence" value="ECO:0000266"/>
    <property type="project" value="RGD"/>
</dbReference>
<dbReference type="GO" id="GO:0007507">
    <property type="term" value="P:heart development"/>
    <property type="evidence" value="ECO:0000266"/>
    <property type="project" value="RGD"/>
</dbReference>
<dbReference type="GO" id="GO:0003129">
    <property type="term" value="P:heart induction"/>
    <property type="evidence" value="ECO:0000266"/>
    <property type="project" value="RGD"/>
</dbReference>
<dbReference type="GO" id="GO:0007156">
    <property type="term" value="P:homophilic cell adhesion via plasma membrane adhesion molecules"/>
    <property type="evidence" value="ECO:0000266"/>
    <property type="project" value="RGD"/>
</dbReference>
<dbReference type="GO" id="GO:0001822">
    <property type="term" value="P:kidney development"/>
    <property type="evidence" value="ECO:0000266"/>
    <property type="project" value="RGD"/>
</dbReference>
<dbReference type="GO" id="GO:0060763">
    <property type="term" value="P:mammary duct terminal end bud growth"/>
    <property type="evidence" value="ECO:0000266"/>
    <property type="project" value="RGD"/>
</dbReference>
<dbReference type="GO" id="GO:0030336">
    <property type="term" value="P:negative regulation of cell migration"/>
    <property type="evidence" value="ECO:0000250"/>
    <property type="project" value="UniProtKB"/>
</dbReference>
<dbReference type="GO" id="GO:0008285">
    <property type="term" value="P:negative regulation of cell population proliferation"/>
    <property type="evidence" value="ECO:0000266"/>
    <property type="project" value="RGD"/>
</dbReference>
<dbReference type="GO" id="GO:0070100">
    <property type="term" value="P:negative regulation of chemokine-mediated signaling pathway"/>
    <property type="evidence" value="ECO:0000266"/>
    <property type="project" value="RGD"/>
</dbReference>
<dbReference type="GO" id="GO:0010629">
    <property type="term" value="P:negative regulation of gene expression"/>
    <property type="evidence" value="ECO:0000266"/>
    <property type="project" value="RGD"/>
</dbReference>
<dbReference type="GO" id="GO:0033600">
    <property type="term" value="P:negative regulation of mammary gland epithelial cell proliferation"/>
    <property type="evidence" value="ECO:0000266"/>
    <property type="project" value="RGD"/>
</dbReference>
<dbReference type="GO" id="GO:0050925">
    <property type="term" value="P:negative regulation of negative chemotaxis"/>
    <property type="evidence" value="ECO:0000266"/>
    <property type="project" value="RGD"/>
</dbReference>
<dbReference type="GO" id="GO:0051964">
    <property type="term" value="P:negative regulation of synapse assembly"/>
    <property type="evidence" value="ECO:0000315"/>
    <property type="project" value="RGD"/>
</dbReference>
<dbReference type="GO" id="GO:1990138">
    <property type="term" value="P:neuron projection extension"/>
    <property type="evidence" value="ECO:0000315"/>
    <property type="project" value="RGD"/>
</dbReference>
<dbReference type="GO" id="GO:0021891">
    <property type="term" value="P:olfactory bulb interneuron development"/>
    <property type="evidence" value="ECO:0000266"/>
    <property type="project" value="RGD"/>
</dbReference>
<dbReference type="GO" id="GO:0014003">
    <property type="term" value="P:oligodendrocyte development"/>
    <property type="evidence" value="ECO:0000270"/>
    <property type="project" value="RGD"/>
</dbReference>
<dbReference type="GO" id="GO:0003148">
    <property type="term" value="P:outflow tract septum morphogenesis"/>
    <property type="evidence" value="ECO:0000266"/>
    <property type="project" value="RGD"/>
</dbReference>
<dbReference type="GO" id="GO:0050772">
    <property type="term" value="P:positive regulation of axonogenesis"/>
    <property type="evidence" value="ECO:0000266"/>
    <property type="project" value="RGD"/>
</dbReference>
<dbReference type="GO" id="GO:0010628">
    <property type="term" value="P:positive regulation of gene expression"/>
    <property type="evidence" value="ECO:0000266"/>
    <property type="project" value="RGD"/>
</dbReference>
<dbReference type="GO" id="GO:0045747">
    <property type="term" value="P:positive regulation of Notch signaling pathway"/>
    <property type="evidence" value="ECO:0000266"/>
    <property type="project" value="RGD"/>
</dbReference>
<dbReference type="GO" id="GO:0035025">
    <property type="term" value="P:positive regulation of Rho protein signal transduction"/>
    <property type="evidence" value="ECO:0000250"/>
    <property type="project" value="UniProtKB"/>
</dbReference>
<dbReference type="GO" id="GO:0030949">
    <property type="term" value="P:positive regulation of vascular endothelial growth factor receptor signaling pathway"/>
    <property type="evidence" value="ECO:0000266"/>
    <property type="project" value="RGD"/>
</dbReference>
<dbReference type="GO" id="GO:1900748">
    <property type="term" value="P:positive regulation of vascular endothelial growth factor signaling pathway"/>
    <property type="evidence" value="ECO:0000266"/>
    <property type="project" value="RGD"/>
</dbReference>
<dbReference type="GO" id="GO:0003184">
    <property type="term" value="P:pulmonary valve morphogenesis"/>
    <property type="evidence" value="ECO:0000266"/>
    <property type="project" value="RGD"/>
</dbReference>
<dbReference type="GO" id="GO:0048814">
    <property type="term" value="P:regulation of dendrite morphogenesis"/>
    <property type="evidence" value="ECO:0000315"/>
    <property type="project" value="UniProtKB"/>
</dbReference>
<dbReference type="GO" id="GO:0035385">
    <property type="term" value="P:Roundabout signaling pathway"/>
    <property type="evidence" value="ECO:0000250"/>
    <property type="project" value="UniProtKB"/>
</dbReference>
<dbReference type="GO" id="GO:0021510">
    <property type="term" value="P:spinal cord development"/>
    <property type="evidence" value="ECO:0000270"/>
    <property type="project" value="RGD"/>
</dbReference>
<dbReference type="GO" id="GO:0050808">
    <property type="term" value="P:synapse organization"/>
    <property type="evidence" value="ECO:0000318"/>
    <property type="project" value="GO_Central"/>
</dbReference>
<dbReference type="GO" id="GO:0003281">
    <property type="term" value="P:ventricular septum development"/>
    <property type="evidence" value="ECO:0000266"/>
    <property type="project" value="RGD"/>
</dbReference>
<dbReference type="GO" id="GO:0060412">
    <property type="term" value="P:ventricular septum morphogenesis"/>
    <property type="evidence" value="ECO:0000266"/>
    <property type="project" value="RGD"/>
</dbReference>
<dbReference type="CDD" id="cd00063">
    <property type="entry name" value="FN3"/>
    <property type="match status" value="3"/>
</dbReference>
<dbReference type="CDD" id="cd07693">
    <property type="entry name" value="IgC_1_Robo"/>
    <property type="match status" value="1"/>
</dbReference>
<dbReference type="CDD" id="cd05724">
    <property type="entry name" value="IgI_2_Robo"/>
    <property type="match status" value="1"/>
</dbReference>
<dbReference type="CDD" id="cd05725">
    <property type="entry name" value="IgI_3_Robo"/>
    <property type="match status" value="1"/>
</dbReference>
<dbReference type="CDD" id="cd05726">
    <property type="entry name" value="IgI_4_Robo"/>
    <property type="match status" value="1"/>
</dbReference>
<dbReference type="CDD" id="cd20952">
    <property type="entry name" value="IgI_5_Robo"/>
    <property type="match status" value="1"/>
</dbReference>
<dbReference type="FunFam" id="2.60.40.10:FF:000053">
    <property type="entry name" value="Roundabout guidance receptor 1"/>
    <property type="match status" value="1"/>
</dbReference>
<dbReference type="FunFam" id="2.60.40.10:FF:000055">
    <property type="entry name" value="roundabout homolog 1 isoform X2"/>
    <property type="match status" value="1"/>
</dbReference>
<dbReference type="FunFam" id="2.60.40.10:FF:000065">
    <property type="entry name" value="roundabout homolog 1 isoform X3"/>
    <property type="match status" value="1"/>
</dbReference>
<dbReference type="FunFam" id="2.60.40.10:FF:000026">
    <property type="entry name" value="roundabout homolog 2 isoform X1"/>
    <property type="match status" value="1"/>
</dbReference>
<dbReference type="FunFam" id="2.60.40.10:FF:000008">
    <property type="entry name" value="roundabout homolog 2 isoform X2"/>
    <property type="match status" value="2"/>
</dbReference>
<dbReference type="FunFam" id="2.60.40.10:FF:000043">
    <property type="entry name" value="roundabout homolog 2 isoform X2"/>
    <property type="match status" value="1"/>
</dbReference>
<dbReference type="FunFam" id="2.60.40.10:FF:000058">
    <property type="entry name" value="roundabout homolog 2 isoform X3"/>
    <property type="match status" value="1"/>
</dbReference>
<dbReference type="Gene3D" id="2.60.40.10">
    <property type="entry name" value="Immunoglobulins"/>
    <property type="match status" value="8"/>
</dbReference>
<dbReference type="InterPro" id="IPR003961">
    <property type="entry name" value="FN3_dom"/>
</dbReference>
<dbReference type="InterPro" id="IPR036116">
    <property type="entry name" value="FN3_sf"/>
</dbReference>
<dbReference type="InterPro" id="IPR007110">
    <property type="entry name" value="Ig-like_dom"/>
</dbReference>
<dbReference type="InterPro" id="IPR036179">
    <property type="entry name" value="Ig-like_dom_sf"/>
</dbReference>
<dbReference type="InterPro" id="IPR013783">
    <property type="entry name" value="Ig-like_fold"/>
</dbReference>
<dbReference type="InterPro" id="IPR013098">
    <property type="entry name" value="Ig_I-set"/>
</dbReference>
<dbReference type="InterPro" id="IPR003599">
    <property type="entry name" value="Ig_sub"/>
</dbReference>
<dbReference type="InterPro" id="IPR003598">
    <property type="entry name" value="Ig_sub2"/>
</dbReference>
<dbReference type="InterPro" id="IPR013106">
    <property type="entry name" value="Ig_V-set"/>
</dbReference>
<dbReference type="InterPro" id="IPR051170">
    <property type="entry name" value="Neural/epithelial_adhesion"/>
</dbReference>
<dbReference type="InterPro" id="IPR032986">
    <property type="entry name" value="Robo1_Ig-like3"/>
</dbReference>
<dbReference type="PANTHER" id="PTHR12231">
    <property type="entry name" value="CTX-RELATED TYPE I TRANSMEMBRANE PROTEIN"/>
    <property type="match status" value="1"/>
</dbReference>
<dbReference type="PANTHER" id="PTHR12231:SF243">
    <property type="entry name" value="ROUNDABOUT HOMOLOG 1"/>
    <property type="match status" value="1"/>
</dbReference>
<dbReference type="Pfam" id="PF00041">
    <property type="entry name" value="fn3"/>
    <property type="match status" value="3"/>
</dbReference>
<dbReference type="Pfam" id="PF07679">
    <property type="entry name" value="I-set"/>
    <property type="match status" value="2"/>
</dbReference>
<dbReference type="Pfam" id="PF13927">
    <property type="entry name" value="Ig_3"/>
    <property type="match status" value="3"/>
</dbReference>
<dbReference type="SMART" id="SM00060">
    <property type="entry name" value="FN3"/>
    <property type="match status" value="3"/>
</dbReference>
<dbReference type="SMART" id="SM00409">
    <property type="entry name" value="IG"/>
    <property type="match status" value="5"/>
</dbReference>
<dbReference type="SMART" id="SM00408">
    <property type="entry name" value="IGc2"/>
    <property type="match status" value="5"/>
</dbReference>
<dbReference type="SMART" id="SM00406">
    <property type="entry name" value="IGv"/>
    <property type="match status" value="3"/>
</dbReference>
<dbReference type="SUPFAM" id="SSF49265">
    <property type="entry name" value="Fibronectin type III"/>
    <property type="match status" value="2"/>
</dbReference>
<dbReference type="SUPFAM" id="SSF48726">
    <property type="entry name" value="Immunoglobulin"/>
    <property type="match status" value="5"/>
</dbReference>
<dbReference type="PROSITE" id="PS50853">
    <property type="entry name" value="FN3"/>
    <property type="match status" value="3"/>
</dbReference>
<dbReference type="PROSITE" id="PS50835">
    <property type="entry name" value="IG_LIKE"/>
    <property type="match status" value="5"/>
</dbReference>
<accession>O55005</accession>
<protein>
    <recommendedName>
        <fullName>Roundabout homolog 1</fullName>
    </recommendedName>
</protein>
<proteinExistence type="evidence at protein level"/>
<name>ROBO1_RAT</name>
<organism>
    <name type="scientific">Rattus norvegicus</name>
    <name type="common">Rat</name>
    <dbReference type="NCBI Taxonomy" id="10116"/>
    <lineage>
        <taxon>Eukaryota</taxon>
        <taxon>Metazoa</taxon>
        <taxon>Chordata</taxon>
        <taxon>Craniata</taxon>
        <taxon>Vertebrata</taxon>
        <taxon>Euteleostomi</taxon>
        <taxon>Mammalia</taxon>
        <taxon>Eutheria</taxon>
        <taxon>Euarchontoglires</taxon>
        <taxon>Glires</taxon>
        <taxon>Rodentia</taxon>
        <taxon>Myomorpha</taxon>
        <taxon>Muroidea</taxon>
        <taxon>Muridae</taxon>
        <taxon>Murinae</taxon>
        <taxon>Rattus</taxon>
    </lineage>
</organism>